<dbReference type="EMBL" id="CP001616">
    <property type="protein sequence ID" value="ACQ94727.1"/>
    <property type="molecule type" value="Genomic_DNA"/>
</dbReference>
<dbReference type="RefSeq" id="WP_015880176.1">
    <property type="nucleotide sequence ID" value="NC_012691.1"/>
</dbReference>
<dbReference type="SMR" id="C4LDW6"/>
<dbReference type="STRING" id="595494.Tola_3139"/>
<dbReference type="KEGG" id="tau:Tola_3139"/>
<dbReference type="eggNOG" id="COG0356">
    <property type="taxonomic scope" value="Bacteria"/>
</dbReference>
<dbReference type="HOGENOM" id="CLU_041018_1_0_6"/>
<dbReference type="OrthoDB" id="9789241at2"/>
<dbReference type="Proteomes" id="UP000009073">
    <property type="component" value="Chromosome"/>
</dbReference>
<dbReference type="GO" id="GO:0005886">
    <property type="term" value="C:plasma membrane"/>
    <property type="evidence" value="ECO:0007669"/>
    <property type="project" value="UniProtKB-SubCell"/>
</dbReference>
<dbReference type="GO" id="GO:0045259">
    <property type="term" value="C:proton-transporting ATP synthase complex"/>
    <property type="evidence" value="ECO:0007669"/>
    <property type="project" value="UniProtKB-KW"/>
</dbReference>
<dbReference type="GO" id="GO:0046933">
    <property type="term" value="F:proton-transporting ATP synthase activity, rotational mechanism"/>
    <property type="evidence" value="ECO:0007669"/>
    <property type="project" value="UniProtKB-UniRule"/>
</dbReference>
<dbReference type="GO" id="GO:0042777">
    <property type="term" value="P:proton motive force-driven plasma membrane ATP synthesis"/>
    <property type="evidence" value="ECO:0007669"/>
    <property type="project" value="TreeGrafter"/>
</dbReference>
<dbReference type="CDD" id="cd00310">
    <property type="entry name" value="ATP-synt_Fo_a_6"/>
    <property type="match status" value="1"/>
</dbReference>
<dbReference type="FunFam" id="1.20.120.220:FF:000002">
    <property type="entry name" value="ATP synthase subunit a"/>
    <property type="match status" value="1"/>
</dbReference>
<dbReference type="Gene3D" id="1.20.120.220">
    <property type="entry name" value="ATP synthase, F0 complex, subunit A"/>
    <property type="match status" value="1"/>
</dbReference>
<dbReference type="HAMAP" id="MF_01393">
    <property type="entry name" value="ATP_synth_a_bact"/>
    <property type="match status" value="1"/>
</dbReference>
<dbReference type="InterPro" id="IPR045082">
    <property type="entry name" value="ATP_syn_F0_a_bact/chloroplast"/>
</dbReference>
<dbReference type="InterPro" id="IPR000568">
    <property type="entry name" value="ATP_synth_F0_asu"/>
</dbReference>
<dbReference type="InterPro" id="IPR023011">
    <property type="entry name" value="ATP_synth_F0_asu_AS"/>
</dbReference>
<dbReference type="InterPro" id="IPR035908">
    <property type="entry name" value="F0_ATP_A_sf"/>
</dbReference>
<dbReference type="NCBIfam" id="TIGR01131">
    <property type="entry name" value="ATP_synt_6_or_A"/>
    <property type="match status" value="1"/>
</dbReference>
<dbReference type="NCBIfam" id="NF004477">
    <property type="entry name" value="PRK05815.1-1"/>
    <property type="match status" value="1"/>
</dbReference>
<dbReference type="PANTHER" id="PTHR42823">
    <property type="entry name" value="ATP SYNTHASE SUBUNIT A, CHLOROPLASTIC"/>
    <property type="match status" value="1"/>
</dbReference>
<dbReference type="PANTHER" id="PTHR42823:SF3">
    <property type="entry name" value="ATP SYNTHASE SUBUNIT A, CHLOROPLASTIC"/>
    <property type="match status" value="1"/>
</dbReference>
<dbReference type="Pfam" id="PF00119">
    <property type="entry name" value="ATP-synt_A"/>
    <property type="match status" value="1"/>
</dbReference>
<dbReference type="PRINTS" id="PR00123">
    <property type="entry name" value="ATPASEA"/>
</dbReference>
<dbReference type="SUPFAM" id="SSF81336">
    <property type="entry name" value="F1F0 ATP synthase subunit A"/>
    <property type="match status" value="1"/>
</dbReference>
<dbReference type="PROSITE" id="PS00449">
    <property type="entry name" value="ATPASE_A"/>
    <property type="match status" value="1"/>
</dbReference>
<name>ATP6_TOLAT</name>
<sequence length="259" mass="29240">MASTGETLTSQEYIAHHLHHLQVGSGFWTVNIDSMVFSVVLGTLFIWLFRRVAVKATSGVPGKLQCFVEIVFGFVDDTVKGIFHGKNKLIAPLALTIFVWIFLMNAMDLLPIDYLPHLAQISNIPYLRVVPSADVNITLSMALGVFFLILFYSIKIKGIGGFVKELTMTPFNHWAFVPINLLLETVTLISKPISLGLRLFGNMYAGEMIFILIAAMLPWWSQWFLNVPWAIFHILIITLQAFIFMVLTIVYLSMACEEH</sequence>
<keyword id="KW-0066">ATP synthesis</keyword>
<keyword id="KW-0997">Cell inner membrane</keyword>
<keyword id="KW-1003">Cell membrane</keyword>
<keyword id="KW-0138">CF(0)</keyword>
<keyword id="KW-0375">Hydrogen ion transport</keyword>
<keyword id="KW-0406">Ion transport</keyword>
<keyword id="KW-0472">Membrane</keyword>
<keyword id="KW-1185">Reference proteome</keyword>
<keyword id="KW-0812">Transmembrane</keyword>
<keyword id="KW-1133">Transmembrane helix</keyword>
<keyword id="KW-0813">Transport</keyword>
<protein>
    <recommendedName>
        <fullName evidence="1">ATP synthase subunit a</fullName>
    </recommendedName>
    <alternativeName>
        <fullName evidence="1">ATP synthase F0 sector subunit a</fullName>
    </alternativeName>
    <alternativeName>
        <fullName evidence="1">F-ATPase subunit 6</fullName>
    </alternativeName>
</protein>
<proteinExistence type="inferred from homology"/>
<evidence type="ECO:0000255" key="1">
    <source>
        <dbReference type="HAMAP-Rule" id="MF_01393"/>
    </source>
</evidence>
<reference key="1">
    <citation type="submission" date="2009-05" db="EMBL/GenBank/DDBJ databases">
        <title>Complete sequence of Tolumonas auensis DSM 9187.</title>
        <authorList>
            <consortium name="US DOE Joint Genome Institute"/>
            <person name="Lucas S."/>
            <person name="Copeland A."/>
            <person name="Lapidus A."/>
            <person name="Glavina del Rio T."/>
            <person name="Tice H."/>
            <person name="Bruce D."/>
            <person name="Goodwin L."/>
            <person name="Pitluck S."/>
            <person name="Chertkov O."/>
            <person name="Brettin T."/>
            <person name="Detter J.C."/>
            <person name="Han C."/>
            <person name="Larimer F."/>
            <person name="Land M."/>
            <person name="Hauser L."/>
            <person name="Kyrpides N."/>
            <person name="Mikhailova N."/>
            <person name="Spring S."/>
            <person name="Beller H."/>
        </authorList>
    </citation>
    <scope>NUCLEOTIDE SEQUENCE [LARGE SCALE GENOMIC DNA]</scope>
    <source>
        <strain>DSM 9187 / NBRC 110442 / TA 4</strain>
    </source>
</reference>
<feature type="chain" id="PRO_1000215157" description="ATP synthase subunit a">
    <location>
        <begin position="1"/>
        <end position="259"/>
    </location>
</feature>
<feature type="transmembrane region" description="Helical" evidence="1">
    <location>
        <begin position="29"/>
        <end position="49"/>
    </location>
</feature>
<feature type="transmembrane region" description="Helical" evidence="1">
    <location>
        <begin position="89"/>
        <end position="109"/>
    </location>
</feature>
<feature type="transmembrane region" description="Helical" evidence="1">
    <location>
        <begin position="132"/>
        <end position="154"/>
    </location>
</feature>
<feature type="transmembrane region" description="Helical" evidence="1">
    <location>
        <begin position="209"/>
        <end position="229"/>
    </location>
</feature>
<feature type="transmembrane region" description="Helical" evidence="1">
    <location>
        <begin position="230"/>
        <end position="250"/>
    </location>
</feature>
<comment type="function">
    <text evidence="1">Key component of the proton channel; it plays a direct role in the translocation of protons across the membrane.</text>
</comment>
<comment type="subunit">
    <text evidence="1">F-type ATPases have 2 components, CF(1) - the catalytic core - and CF(0) - the membrane proton channel. CF(1) has five subunits: alpha(3), beta(3), gamma(1), delta(1), epsilon(1). CF(0) has three main subunits: a(1), b(2) and c(9-12). The alpha and beta chains form an alternating ring which encloses part of the gamma chain. CF(1) is attached to CF(0) by a central stalk formed by the gamma and epsilon chains, while a peripheral stalk is formed by the delta and b chains.</text>
</comment>
<comment type="subcellular location">
    <subcellularLocation>
        <location evidence="1">Cell inner membrane</location>
        <topology evidence="1">Multi-pass membrane protein</topology>
    </subcellularLocation>
</comment>
<comment type="similarity">
    <text evidence="1">Belongs to the ATPase A chain family.</text>
</comment>
<accession>C4LDW6</accession>
<gene>
    <name evidence="1" type="primary">atpB</name>
    <name type="ordered locus">Tola_3139</name>
</gene>
<organism>
    <name type="scientific">Tolumonas auensis (strain DSM 9187 / NBRC 110442 / TA 4)</name>
    <dbReference type="NCBI Taxonomy" id="595494"/>
    <lineage>
        <taxon>Bacteria</taxon>
        <taxon>Pseudomonadati</taxon>
        <taxon>Pseudomonadota</taxon>
        <taxon>Gammaproteobacteria</taxon>
        <taxon>Aeromonadales</taxon>
        <taxon>Aeromonadaceae</taxon>
        <taxon>Tolumonas</taxon>
    </lineage>
</organism>